<keyword id="KW-0963">Cytoplasm</keyword>
<keyword id="KW-0217">Developmental protein</keyword>
<keyword id="KW-0221">Differentiation</keyword>
<keyword id="KW-0539">Nucleus</keyword>
<keyword id="KW-0896">Oogenesis</keyword>
<keyword id="KW-1185">Reference proteome</keyword>
<keyword id="KW-0677">Repeat</keyword>
<keyword id="KW-0744">Spermatogenesis</keyword>
<keyword id="KW-0819">tRNA processing</keyword>
<keyword id="KW-0853">WD repeat</keyword>
<name>WUHO_DROME</name>
<proteinExistence type="evidence at protein level"/>
<feature type="chain" id="PRO_0000370545" description="tRNA (guanine-N(7)-)-methyltransferase non-catalytic subunit wuho">
    <location>
        <begin position="1"/>
        <end position="424"/>
    </location>
</feature>
<feature type="repeat" description="WD 1" evidence="1">
    <location>
        <begin position="96"/>
        <end position="137"/>
    </location>
</feature>
<feature type="repeat" description="WD 2" evidence="1">
    <location>
        <begin position="184"/>
        <end position="223"/>
    </location>
</feature>
<feature type="repeat" description="WD 3" evidence="1">
    <location>
        <begin position="227"/>
        <end position="265"/>
    </location>
</feature>
<feature type="repeat" description="WD 4" evidence="1">
    <location>
        <begin position="324"/>
        <end position="364"/>
    </location>
</feature>
<feature type="region of interest" description="Disordered" evidence="3">
    <location>
        <begin position="42"/>
        <end position="92"/>
    </location>
</feature>
<feature type="compositionally biased region" description="Low complexity" evidence="3">
    <location>
        <begin position="46"/>
        <end position="68"/>
    </location>
</feature>
<gene>
    <name evidence="2 10" type="primary">wuho</name>
    <name evidence="7" type="synonym">wh</name>
    <name evidence="10" type="ORF">CG15897</name>
</gene>
<comment type="function">
    <text evidence="2 5 6">Required for the Mettl1-dependent formation of N(7)-methylguanine at position 46 (m7G46) in tRNA (By similarity) (PubMed:39317727). In the Mettl1-wuho methyltransferase complex, it is required to stabilize and induce conformational changes of the catalytic subunit (By similarity). Required for binding of nanos mRNA and repression of translation by the mei-P26-bgcn-bam-sxl complex (PubMed:31941704). May cooperate with mei-P26 and nanos to derepress the BMP signaling pathway (PubMed:31941704). May cooperate with mei-P26 to suppress expression of a subset of microRNAs (PubMed:31941704). May cooperate with mei-P26 to regulate bam expression levels in germline cells during gametogenesis (PubMed:31941704). Required to promote mitosis to meiosis transition during gametogenesis (PubMed:31941704). May regulate germline cell division in part by regulating ribosome biogenesis (PubMed:31941704).</text>
</comment>
<comment type="pathway">
    <text evidence="2">tRNA modification; N(7)-methylguanine-tRNA biosynthesis.</text>
</comment>
<comment type="subunit">
    <text evidence="2 5 6">Forms a heterodimer with the catalytic subunit Mettl1 (By similarity) (PubMed:39317727). Interacts with mei-P26 and weakly interacts with bgcn; required for the function or formation of the mei-P26-bgcn-bam-sxl complex (PubMed:31941704). Interacts with nanos; may be involved in mei-P26-dependent derepression of the BMP signaling pathway (PubMed:31941704). Interacts with Myc; the interaction may be mediated by mei-P26 and may be involved in the regulation of ribosome biogenesis (PubMed:31941704).</text>
</comment>
<comment type="subcellular location">
    <subcellularLocation>
        <location evidence="2 4">Nucleus</location>
    </subcellularLocation>
    <subcellularLocation>
        <location evidence="5">Cytoplasm</location>
    </subcellularLocation>
    <text evidence="4 5">Localized to the nuclei of nurse cells, follicle cells and oocytes at early stages, from germarium to stage 4 egg chambers. Also present in the nuclei of spermatocytes and in the apical cells of the testes (PubMed:16762337). In the cytoplasm of all germline and somatic cells of the ovary (PubMed:31941704).</text>
</comment>
<comment type="tissue specificity">
    <text evidence="4 5 6">In testis, it is present at high level in hub cells, a niche for germline stem cells of testis (PubMed:16762337). Ubiquitously expressed in all testicular cells throughout spermatogenesis (PubMed:39317727). Ubiquitously expressed in all germline and somatic cells of the ovary (PubMed:31941704).</text>
</comment>
<comment type="disruption phenotype">
    <text evidence="4 5">Male sterile and female semi-sterile phenotypes (PubMed:16762337, PubMed:31941704). In males, spermatogenesis is arrested at the elongating stage of the developing spermatids, resulting in an absence of mature sperms in the seminal vesicles (PubMed:16762337). The decreased fertility in females is mostly due to defects in oogenesis (PubMed:16762337, PubMed:31941704). There are abnormal egg chambers, in which cystocytes fail to arrest cell division at the fourth mitotic cycle, resulting in overprolliferation (PubMed:16762337, PubMed:31941704). Cystocytes fail to differentiate and do not make the transition from mitosis to meiosis (PubMed:16762337, PubMed:31941704). Maintenance of ovarian germline stem cell (GSC) numbers is disrupted, reducing further with age (PubMed:31941704). Abscission of ovarian GSCs from daughter cystoblasts is disrupted with some GSCs remaining connected with several daughter cells via long branched fusomes and open ring canals and ending up in the germarium (PubMed:31941704). Tissue specific RNAi-mediated knockdown in ovarian germline cells results in failed abscission of GSCs from daughter cystoblasts (PubMed:31941704). Ovarian cysts may become tumorous (PubMed:31941704). Germline cells display enlarged nucleoli indicating enhanced ribosomal biogenesis (PubMed:31941704).</text>
</comment>
<comment type="miscellaneous">
    <text evidence="9">Wuho means 'no progeny' in Chinese.</text>
</comment>
<comment type="similarity">
    <text evidence="2">Belongs to the WD repeat TRM82 family.</text>
</comment>
<comment type="sequence caution" evidence="8">
    <conflict type="miscellaneous discrepancy">
        <sequence resource="EMBL-CDS" id="ABV82211"/>
    </conflict>
    <text>Duplication of 82 nt that changes the frame.</text>
</comment>
<evidence type="ECO:0000255" key="1"/>
<evidence type="ECO:0000255" key="2">
    <source>
        <dbReference type="HAMAP-Rule" id="MF_03056"/>
    </source>
</evidence>
<evidence type="ECO:0000256" key="3">
    <source>
        <dbReference type="SAM" id="MobiDB-lite"/>
    </source>
</evidence>
<evidence type="ECO:0000269" key="4">
    <source>
    </source>
</evidence>
<evidence type="ECO:0000269" key="5">
    <source>
    </source>
</evidence>
<evidence type="ECO:0000269" key="6">
    <source>
    </source>
</evidence>
<evidence type="ECO:0000303" key="7">
    <source>
    </source>
</evidence>
<evidence type="ECO:0000305" key="8"/>
<evidence type="ECO:0000305" key="9">
    <source>
    </source>
</evidence>
<evidence type="ECO:0000312" key="10">
    <source>
        <dbReference type="FlyBase" id="FBgn0029857"/>
    </source>
</evidence>
<sequence length="424" mass="46498">MCTTISFAEPEIVLGHGRRVLFVNPDDLQIFKEIELPPDLGLKGHTSQSQESCTAAAAASTATAASGQAPGGKEQQLANQPEEGGTSASASGLGCATSTSVQNVAYSPDGQLLAVTTSGKQKALLLYRSRPENARLLSARPLARASSALRFCSDSSSILVTDKTGDCYQYDCVEVEAPPRLLLGHLSVVYDILWSEDQQHIITCDRDDKIRVTNYPATFDIHSYCLGHREFVSGLALLTEQHIASASGDKTLRVWNYIQGKELLQHELPAPAVRLLVRQLEPEKVFQAAVLFYEHVDALGLYRLERSSDDTWSVTATQLVCAEAGSWSISNFTLTSDRIYITGAENERLSLRVYDIATGQPASSGVPEGWLKMVLDGLGANEEGAPPFIPEDLSVWFKKRFDNVSDYLERKKRRIEEQQQQKCG</sequence>
<organism evidence="10">
    <name type="scientific">Drosophila melanogaster</name>
    <name type="common">Fruit fly</name>
    <dbReference type="NCBI Taxonomy" id="7227"/>
    <lineage>
        <taxon>Eukaryota</taxon>
        <taxon>Metazoa</taxon>
        <taxon>Ecdysozoa</taxon>
        <taxon>Arthropoda</taxon>
        <taxon>Hexapoda</taxon>
        <taxon>Insecta</taxon>
        <taxon>Pterygota</taxon>
        <taxon>Neoptera</taxon>
        <taxon>Endopterygota</taxon>
        <taxon>Diptera</taxon>
        <taxon>Brachycera</taxon>
        <taxon>Muscomorpha</taxon>
        <taxon>Ephydroidea</taxon>
        <taxon>Drosophilidae</taxon>
        <taxon>Drosophila</taxon>
        <taxon>Sophophora</taxon>
    </lineage>
</organism>
<accession>Q9W415</accession>
<accession>A8E6N7</accession>
<accession>A9YJ32</accession>
<reference key="1">
    <citation type="journal article" date="2000" name="Science">
        <title>The genome sequence of Drosophila melanogaster.</title>
        <authorList>
            <person name="Adams M.D."/>
            <person name="Celniker S.E."/>
            <person name="Holt R.A."/>
            <person name="Evans C.A."/>
            <person name="Gocayne J.D."/>
            <person name="Amanatides P.G."/>
            <person name="Scherer S.E."/>
            <person name="Li P.W."/>
            <person name="Hoskins R.A."/>
            <person name="Galle R.F."/>
            <person name="George R.A."/>
            <person name="Lewis S.E."/>
            <person name="Richards S."/>
            <person name="Ashburner M."/>
            <person name="Henderson S.N."/>
            <person name="Sutton G.G."/>
            <person name="Wortman J.R."/>
            <person name="Yandell M.D."/>
            <person name="Zhang Q."/>
            <person name="Chen L.X."/>
            <person name="Brandon R.C."/>
            <person name="Rogers Y.-H.C."/>
            <person name="Blazej R.G."/>
            <person name="Champe M."/>
            <person name="Pfeiffer B.D."/>
            <person name="Wan K.H."/>
            <person name="Doyle C."/>
            <person name="Baxter E.G."/>
            <person name="Helt G."/>
            <person name="Nelson C.R."/>
            <person name="Miklos G.L.G."/>
            <person name="Abril J.F."/>
            <person name="Agbayani A."/>
            <person name="An H.-J."/>
            <person name="Andrews-Pfannkoch C."/>
            <person name="Baldwin D."/>
            <person name="Ballew R.M."/>
            <person name="Basu A."/>
            <person name="Baxendale J."/>
            <person name="Bayraktaroglu L."/>
            <person name="Beasley E.M."/>
            <person name="Beeson K.Y."/>
            <person name="Benos P.V."/>
            <person name="Berman B.P."/>
            <person name="Bhandari D."/>
            <person name="Bolshakov S."/>
            <person name="Borkova D."/>
            <person name="Botchan M.R."/>
            <person name="Bouck J."/>
            <person name="Brokstein P."/>
            <person name="Brottier P."/>
            <person name="Burtis K.C."/>
            <person name="Busam D.A."/>
            <person name="Butler H."/>
            <person name="Cadieu E."/>
            <person name="Center A."/>
            <person name="Chandra I."/>
            <person name="Cherry J.M."/>
            <person name="Cawley S."/>
            <person name="Dahlke C."/>
            <person name="Davenport L.B."/>
            <person name="Davies P."/>
            <person name="de Pablos B."/>
            <person name="Delcher A."/>
            <person name="Deng Z."/>
            <person name="Mays A.D."/>
            <person name="Dew I."/>
            <person name="Dietz S.M."/>
            <person name="Dodson K."/>
            <person name="Doup L.E."/>
            <person name="Downes M."/>
            <person name="Dugan-Rocha S."/>
            <person name="Dunkov B.C."/>
            <person name="Dunn P."/>
            <person name="Durbin K.J."/>
            <person name="Evangelista C.C."/>
            <person name="Ferraz C."/>
            <person name="Ferriera S."/>
            <person name="Fleischmann W."/>
            <person name="Fosler C."/>
            <person name="Gabrielian A.E."/>
            <person name="Garg N.S."/>
            <person name="Gelbart W.M."/>
            <person name="Glasser K."/>
            <person name="Glodek A."/>
            <person name="Gong F."/>
            <person name="Gorrell J.H."/>
            <person name="Gu Z."/>
            <person name="Guan P."/>
            <person name="Harris M."/>
            <person name="Harris N.L."/>
            <person name="Harvey D.A."/>
            <person name="Heiman T.J."/>
            <person name="Hernandez J.R."/>
            <person name="Houck J."/>
            <person name="Hostin D."/>
            <person name="Houston K.A."/>
            <person name="Howland T.J."/>
            <person name="Wei M.-H."/>
            <person name="Ibegwam C."/>
            <person name="Jalali M."/>
            <person name="Kalush F."/>
            <person name="Karpen G.H."/>
            <person name="Ke Z."/>
            <person name="Kennison J.A."/>
            <person name="Ketchum K.A."/>
            <person name="Kimmel B.E."/>
            <person name="Kodira C.D."/>
            <person name="Kraft C.L."/>
            <person name="Kravitz S."/>
            <person name="Kulp D."/>
            <person name="Lai Z."/>
            <person name="Lasko P."/>
            <person name="Lei Y."/>
            <person name="Levitsky A.A."/>
            <person name="Li J.H."/>
            <person name="Li Z."/>
            <person name="Liang Y."/>
            <person name="Lin X."/>
            <person name="Liu X."/>
            <person name="Mattei B."/>
            <person name="McIntosh T.C."/>
            <person name="McLeod M.P."/>
            <person name="McPherson D."/>
            <person name="Merkulov G."/>
            <person name="Milshina N.V."/>
            <person name="Mobarry C."/>
            <person name="Morris J."/>
            <person name="Moshrefi A."/>
            <person name="Mount S.M."/>
            <person name="Moy M."/>
            <person name="Murphy B."/>
            <person name="Murphy L."/>
            <person name="Muzny D.M."/>
            <person name="Nelson D.L."/>
            <person name="Nelson D.R."/>
            <person name="Nelson K.A."/>
            <person name="Nixon K."/>
            <person name="Nusskern D.R."/>
            <person name="Pacleb J.M."/>
            <person name="Palazzolo M."/>
            <person name="Pittman G.S."/>
            <person name="Pan S."/>
            <person name="Pollard J."/>
            <person name="Puri V."/>
            <person name="Reese M.G."/>
            <person name="Reinert K."/>
            <person name="Remington K."/>
            <person name="Saunders R.D.C."/>
            <person name="Scheeler F."/>
            <person name="Shen H."/>
            <person name="Shue B.C."/>
            <person name="Siden-Kiamos I."/>
            <person name="Simpson M."/>
            <person name="Skupski M.P."/>
            <person name="Smith T.J."/>
            <person name="Spier E."/>
            <person name="Spradling A.C."/>
            <person name="Stapleton M."/>
            <person name="Strong R."/>
            <person name="Sun E."/>
            <person name="Svirskas R."/>
            <person name="Tector C."/>
            <person name="Turner R."/>
            <person name="Venter E."/>
            <person name="Wang A.H."/>
            <person name="Wang X."/>
            <person name="Wang Z.-Y."/>
            <person name="Wassarman D.A."/>
            <person name="Weinstock G.M."/>
            <person name="Weissenbach J."/>
            <person name="Williams S.M."/>
            <person name="Woodage T."/>
            <person name="Worley K.C."/>
            <person name="Wu D."/>
            <person name="Yang S."/>
            <person name="Yao Q.A."/>
            <person name="Ye J."/>
            <person name="Yeh R.-F."/>
            <person name="Zaveri J.S."/>
            <person name="Zhan M."/>
            <person name="Zhang G."/>
            <person name="Zhao Q."/>
            <person name="Zheng L."/>
            <person name="Zheng X.H."/>
            <person name="Zhong F.N."/>
            <person name="Zhong W."/>
            <person name="Zhou X."/>
            <person name="Zhu S.C."/>
            <person name="Zhu X."/>
            <person name="Smith H.O."/>
            <person name="Gibbs R.A."/>
            <person name="Myers E.W."/>
            <person name="Rubin G.M."/>
            <person name="Venter J.C."/>
        </authorList>
    </citation>
    <scope>NUCLEOTIDE SEQUENCE [LARGE SCALE GENOMIC DNA]</scope>
    <source>
        <strain>Berkeley</strain>
    </source>
</reference>
<reference key="2">
    <citation type="journal article" date="2002" name="Genome Biol.">
        <title>Annotation of the Drosophila melanogaster euchromatic genome: a systematic review.</title>
        <authorList>
            <person name="Misra S."/>
            <person name="Crosby M.A."/>
            <person name="Mungall C.J."/>
            <person name="Matthews B.B."/>
            <person name="Campbell K.S."/>
            <person name="Hradecky P."/>
            <person name="Huang Y."/>
            <person name="Kaminker J.S."/>
            <person name="Millburn G.H."/>
            <person name="Prochnik S.E."/>
            <person name="Smith C.D."/>
            <person name="Tupy J.L."/>
            <person name="Whitfield E.J."/>
            <person name="Bayraktaroglu L."/>
            <person name="Berman B.P."/>
            <person name="Bettencourt B.R."/>
            <person name="Celniker S.E."/>
            <person name="de Grey A.D.N.J."/>
            <person name="Drysdale R.A."/>
            <person name="Harris N.L."/>
            <person name="Richter J."/>
            <person name="Russo S."/>
            <person name="Schroeder A.J."/>
            <person name="Shu S.Q."/>
            <person name="Stapleton M."/>
            <person name="Yamada C."/>
            <person name="Ashburner M."/>
            <person name="Gelbart W.M."/>
            <person name="Rubin G.M."/>
            <person name="Lewis S.E."/>
        </authorList>
    </citation>
    <scope>GENOME REANNOTATION</scope>
    <source>
        <strain>Berkeley</strain>
    </source>
</reference>
<reference key="3">
    <citation type="submission" date="2007-10" db="EMBL/GenBank/DDBJ databases">
        <authorList>
            <person name="Stapleton M."/>
            <person name="Carlson J.W."/>
            <person name="Frise E."/>
            <person name="Kapadia B."/>
            <person name="Park S."/>
            <person name="Wan K.H."/>
            <person name="Yu C."/>
            <person name="Celniker S.E."/>
        </authorList>
    </citation>
    <scope>NUCLEOTIDE SEQUENCE [LARGE SCALE MRNA]</scope>
    <source>
        <strain>Berkeley</strain>
    </source>
</reference>
<reference key="4">
    <citation type="journal article" date="2007" name="Genome Res.">
        <title>Hitchhiking effects of recurrent beneficial amino acid substitutions in the Drosophila melanogaster genome.</title>
        <authorList>
            <person name="Andolfatto P."/>
        </authorList>
    </citation>
    <scope>NUCLEOTIDE SEQUENCE [GENOMIC DNA] OF 184-419</scope>
    <source>
        <strain>ZW104</strain>
        <strain>ZW106</strain>
        <strain>ZW109</strain>
        <strain>ZW122</strain>
        <strain>ZW123</strain>
        <strain>ZW133</strain>
        <strain>ZW136</strain>
        <strain>ZW139</strain>
        <strain>ZW141</strain>
        <strain>ZW142</strain>
        <strain>ZW143</strain>
        <strain>ZW149</strain>
    </source>
</reference>
<reference key="5">
    <citation type="journal article" date="2006" name="Dev. Biol.">
        <title>A new Drosophila gene wh (wuho) with WD40 repeats is essential for spermatogenesis and has maximal expression in hub cells.</title>
        <authorList>
            <person name="Wu J."/>
            <person name="Hou J.H."/>
            <person name="Hsieh T.-S."/>
        </authorList>
    </citation>
    <scope>SUBCELLULAR LOCATION</scope>
    <scope>TISSUE SPECIFICITY</scope>
    <scope>DISRUPTION PHENOTYPE</scope>
</reference>
<reference key="6">
    <citation type="journal article" date="2020" name="Development">
        <title>WD40 protein Wuho controls germline homeostasis via TRIM-NHL tumor suppressor Mei-p26 in Drosophila.</title>
        <authorList>
            <person name="Rastegari E."/>
            <person name="Kajal K."/>
            <person name="Tan B.S."/>
            <person name="Huang F."/>
            <person name="Chen R.H."/>
            <person name="Hsieh T.S."/>
            <person name="Hsu H.J."/>
        </authorList>
    </citation>
    <scope>FUNCTION</scope>
    <scope>INTERACTION WITH MEI-P26; BGCN; MYC AND NANOS</scope>
    <scope>SUBCELLULAR LOCATION</scope>
    <scope>TISSUE SPECIFICITY</scope>
    <scope>DISRUPTION PHENOTYPE</scope>
</reference>
<reference key="7">
    <citation type="journal article" date="2024" name="Nat. Commun.">
        <title>Mettl1-dependent m7G tRNA modification is essential for maintaining spermatogenesis and fertility in Drosophila melanogaster.</title>
        <authorList>
            <person name="Kaneko S."/>
            <person name="Miyoshi K."/>
            <person name="Tomuro K."/>
            <person name="Terauchi M."/>
            <person name="Tanaka R."/>
            <person name="Kondo S."/>
            <person name="Tani N."/>
            <person name="Ishiguro K.I."/>
            <person name="Toyoda A."/>
            <person name="Kamikouchi A."/>
            <person name="Noguchi H."/>
            <person name="Iwasaki S."/>
            <person name="Saito K."/>
        </authorList>
    </citation>
    <scope>FUNCTION</scope>
    <scope>INTERACTION WITH METTL1</scope>
    <scope>TISSUE SPECIFICITY</scope>
</reference>
<dbReference type="EMBL" id="AE014298">
    <property type="protein sequence ID" value="AAF46145.1"/>
    <property type="molecule type" value="Genomic_DNA"/>
</dbReference>
<dbReference type="EMBL" id="BT030829">
    <property type="protein sequence ID" value="ABV82211.1"/>
    <property type="status" value="ALT_SEQ"/>
    <property type="molecule type" value="mRNA"/>
</dbReference>
<dbReference type="EMBL" id="EU217765">
    <property type="protein sequence ID" value="ABW92684.1"/>
    <property type="molecule type" value="Genomic_DNA"/>
</dbReference>
<dbReference type="EMBL" id="EU217766">
    <property type="protein sequence ID" value="ABW92685.1"/>
    <property type="molecule type" value="Genomic_DNA"/>
</dbReference>
<dbReference type="EMBL" id="EU217767">
    <property type="protein sequence ID" value="ABW92686.1"/>
    <property type="molecule type" value="Genomic_DNA"/>
</dbReference>
<dbReference type="EMBL" id="EU217768">
    <property type="protein sequence ID" value="ABW92687.1"/>
    <property type="molecule type" value="Genomic_DNA"/>
</dbReference>
<dbReference type="EMBL" id="EU217769">
    <property type="protein sequence ID" value="ABW92688.1"/>
    <property type="molecule type" value="Genomic_DNA"/>
</dbReference>
<dbReference type="EMBL" id="EU217770">
    <property type="protein sequence ID" value="ABW92689.1"/>
    <property type="molecule type" value="Genomic_DNA"/>
</dbReference>
<dbReference type="EMBL" id="EU217771">
    <property type="protein sequence ID" value="ABW92690.1"/>
    <property type="molecule type" value="Genomic_DNA"/>
</dbReference>
<dbReference type="EMBL" id="EU217772">
    <property type="protein sequence ID" value="ABW92691.1"/>
    <property type="molecule type" value="Genomic_DNA"/>
</dbReference>
<dbReference type="EMBL" id="EU217773">
    <property type="protein sequence ID" value="ABW92692.1"/>
    <property type="molecule type" value="Genomic_DNA"/>
</dbReference>
<dbReference type="EMBL" id="EU217774">
    <property type="protein sequence ID" value="ABW92693.1"/>
    <property type="molecule type" value="Genomic_DNA"/>
</dbReference>
<dbReference type="EMBL" id="EU217775">
    <property type="protein sequence ID" value="ABW92694.1"/>
    <property type="molecule type" value="Genomic_DNA"/>
</dbReference>
<dbReference type="EMBL" id="EU217776">
    <property type="protein sequence ID" value="ABW92695.1"/>
    <property type="molecule type" value="Genomic_DNA"/>
</dbReference>
<dbReference type="RefSeq" id="NP_572307.1">
    <property type="nucleotide sequence ID" value="NM_132079.4"/>
</dbReference>
<dbReference type="SMR" id="Q9W415"/>
<dbReference type="BioGRID" id="58055">
    <property type="interactions" value="6"/>
</dbReference>
<dbReference type="FunCoup" id="Q9W415">
    <property type="interactions" value="650"/>
</dbReference>
<dbReference type="IntAct" id="Q9W415">
    <property type="interactions" value="21"/>
</dbReference>
<dbReference type="STRING" id="7227.FBpp0070862"/>
<dbReference type="PaxDb" id="7227-FBpp0070862"/>
<dbReference type="DNASU" id="31566"/>
<dbReference type="EnsemblMetazoa" id="FBtr0070897">
    <property type="protein sequence ID" value="FBpp0070862"/>
    <property type="gene ID" value="FBgn0029857"/>
</dbReference>
<dbReference type="GeneID" id="31566"/>
<dbReference type="KEGG" id="dme:Dmel_CG15897"/>
<dbReference type="UCSC" id="CG15897-RA">
    <property type="organism name" value="d. melanogaster"/>
</dbReference>
<dbReference type="AGR" id="FB:FBgn0029857"/>
<dbReference type="CTD" id="31566"/>
<dbReference type="FlyBase" id="FBgn0029857">
    <property type="gene designation" value="wuho"/>
</dbReference>
<dbReference type="VEuPathDB" id="VectorBase:FBgn0029857"/>
<dbReference type="eggNOG" id="KOG3914">
    <property type="taxonomic scope" value="Eukaryota"/>
</dbReference>
<dbReference type="GeneTree" id="ENSGT00390000012174"/>
<dbReference type="HOGENOM" id="CLU_054270_0_0_1"/>
<dbReference type="InParanoid" id="Q9W415"/>
<dbReference type="OMA" id="SVWFKKR"/>
<dbReference type="OrthoDB" id="371245at2759"/>
<dbReference type="PhylomeDB" id="Q9W415"/>
<dbReference type="UniPathway" id="UPA00989"/>
<dbReference type="BioGRID-ORCS" id="31566">
    <property type="hits" value="0 hits in 1 CRISPR screen"/>
</dbReference>
<dbReference type="GenomeRNAi" id="31566"/>
<dbReference type="PRO" id="PR:Q9W415"/>
<dbReference type="Proteomes" id="UP000000803">
    <property type="component" value="Chromosome X"/>
</dbReference>
<dbReference type="Bgee" id="FBgn0029857">
    <property type="expression patterns" value="Expressed in adult middle midgut class II enteroendocrine cell in adult midgut (Drosophila) and 70 other cell types or tissues"/>
</dbReference>
<dbReference type="ExpressionAtlas" id="Q9W415">
    <property type="expression patterns" value="baseline and differential"/>
</dbReference>
<dbReference type="GO" id="GO:0005829">
    <property type="term" value="C:cytosol"/>
    <property type="evidence" value="ECO:0000318"/>
    <property type="project" value="GO_Central"/>
</dbReference>
<dbReference type="GO" id="GO:0001674">
    <property type="term" value="C:female germ cell nucleus"/>
    <property type="evidence" value="ECO:0000314"/>
    <property type="project" value="UniProtKB"/>
</dbReference>
<dbReference type="GO" id="GO:0001673">
    <property type="term" value="C:male germ cell nucleus"/>
    <property type="evidence" value="ECO:0000314"/>
    <property type="project" value="UniProtKB"/>
</dbReference>
<dbReference type="GO" id="GO:0005634">
    <property type="term" value="C:nucleus"/>
    <property type="evidence" value="ECO:0000318"/>
    <property type="project" value="GO_Central"/>
</dbReference>
<dbReference type="GO" id="GO:0106143">
    <property type="term" value="C:tRNA (m7G46) methyltransferase complex"/>
    <property type="evidence" value="ECO:0000353"/>
    <property type="project" value="FlyBase"/>
</dbReference>
<dbReference type="GO" id="GO:0043527">
    <property type="term" value="C:tRNA methyltransferase complex"/>
    <property type="evidence" value="ECO:0000318"/>
    <property type="project" value="GO_Central"/>
</dbReference>
<dbReference type="GO" id="GO:0048477">
    <property type="term" value="P:oogenesis"/>
    <property type="evidence" value="ECO:0000315"/>
    <property type="project" value="FlyBase"/>
</dbReference>
<dbReference type="GO" id="GO:0007283">
    <property type="term" value="P:spermatogenesis"/>
    <property type="evidence" value="ECO:0000315"/>
    <property type="project" value="FlyBase"/>
</dbReference>
<dbReference type="GO" id="GO:0106004">
    <property type="term" value="P:tRNA (guanine-N7)-methylation"/>
    <property type="evidence" value="ECO:0007669"/>
    <property type="project" value="UniProtKB-UniRule"/>
</dbReference>
<dbReference type="GO" id="GO:0006400">
    <property type="term" value="P:tRNA modification"/>
    <property type="evidence" value="ECO:0000318"/>
    <property type="project" value="GO_Central"/>
</dbReference>
<dbReference type="FunFam" id="2.130.10.10:FF:002224">
    <property type="entry name" value="tRNA (guanine-N(7)-)-methyltransferase non-catalytic subunit wuho"/>
    <property type="match status" value="1"/>
</dbReference>
<dbReference type="Gene3D" id="2.130.10.10">
    <property type="entry name" value="YVTN repeat-like/Quinoprotein amine dehydrogenase"/>
    <property type="match status" value="1"/>
</dbReference>
<dbReference type="HAMAP" id="MF_03056">
    <property type="entry name" value="TRM82"/>
    <property type="match status" value="1"/>
</dbReference>
<dbReference type="InterPro" id="IPR028884">
    <property type="entry name" value="Trm82"/>
</dbReference>
<dbReference type="InterPro" id="IPR015943">
    <property type="entry name" value="WD40/YVTN_repeat-like_dom_sf"/>
</dbReference>
<dbReference type="InterPro" id="IPR036322">
    <property type="entry name" value="WD40_repeat_dom_sf"/>
</dbReference>
<dbReference type="InterPro" id="IPR001680">
    <property type="entry name" value="WD40_rpt"/>
</dbReference>
<dbReference type="PANTHER" id="PTHR16288:SF0">
    <property type="entry name" value="TRNA (GUANINE-N(7)-)-METHYLTRANSFERASE NON-CATALYTIC SUBUNIT WDR4"/>
    <property type="match status" value="1"/>
</dbReference>
<dbReference type="PANTHER" id="PTHR16288">
    <property type="entry name" value="WD40 REPEAT PROTEIN 4"/>
    <property type="match status" value="1"/>
</dbReference>
<dbReference type="Pfam" id="PF00400">
    <property type="entry name" value="WD40"/>
    <property type="match status" value="2"/>
</dbReference>
<dbReference type="SMART" id="SM00320">
    <property type="entry name" value="WD40"/>
    <property type="match status" value="3"/>
</dbReference>
<dbReference type="SUPFAM" id="SSF50978">
    <property type="entry name" value="WD40 repeat-like"/>
    <property type="match status" value="1"/>
</dbReference>
<dbReference type="PROSITE" id="PS50082">
    <property type="entry name" value="WD_REPEATS_2"/>
    <property type="match status" value="1"/>
</dbReference>
<dbReference type="PROSITE" id="PS50294">
    <property type="entry name" value="WD_REPEATS_REGION"/>
    <property type="match status" value="1"/>
</dbReference>
<protein>
    <recommendedName>
        <fullName evidence="2">tRNA (guanine-N(7)-)-methyltransferase non-catalytic subunit wuho</fullName>
    </recommendedName>
    <alternativeName>
        <fullName evidence="10">protein wuho</fullName>
    </alternativeName>
</protein>